<sequence>MAMTTEVKDELSRLVVKSVSARRAEVTSLLRFAGGLHIVGGRVVVEAEVDLGNVARRLRKDIFELYGYNAVVHVLSASGIRKSTRYVLRVANDGEALARQTGLLDNRGRPVRGLPAQVVGGSIADAEAAWRGAFLAHGSLTEPGRSSALEVSCPGPEAALALVGAARRLGVSAKAREVRGADRVVVRDGEAIGALLTRMGAQDTRLIWEERRMRREVRATANRLANFDDANLRRSARAAVAAAARVERALEILGDTVPDHLASAGKLRVEHRQASLEELGRLADPPMTKDAVAGRIRRLLSMADRKAKIEGIPDTESAVTPDLLEDA</sequence>
<organism>
    <name type="scientific">Mycolicibacterium paratuberculosis (strain ATCC BAA-968 / K-10)</name>
    <name type="common">Mycobacterium paratuberculosis</name>
    <dbReference type="NCBI Taxonomy" id="262316"/>
    <lineage>
        <taxon>Bacteria</taxon>
        <taxon>Bacillati</taxon>
        <taxon>Actinomycetota</taxon>
        <taxon>Actinomycetes</taxon>
        <taxon>Mycobacteriales</taxon>
        <taxon>Mycobacteriaceae</taxon>
        <taxon>Mycobacterium</taxon>
        <taxon>Mycobacterium avium complex (MAC)</taxon>
    </lineage>
</organism>
<protein>
    <recommendedName>
        <fullName evidence="2">Probable cell division protein WhiA</fullName>
    </recommendedName>
</protein>
<accession>Q741E2</accession>
<feature type="chain" id="PRO_0000376529" description="Probable cell division protein WhiA">
    <location>
        <begin position="1"/>
        <end position="327"/>
    </location>
</feature>
<feature type="DNA-binding region" description="H-T-H motif" evidence="2">
    <location>
        <begin position="275"/>
        <end position="308"/>
    </location>
</feature>
<comment type="function">
    <text evidence="2">Involved in cell division and chromosome segregation.</text>
</comment>
<comment type="similarity">
    <text evidence="2">Belongs to the WhiA family.</text>
</comment>
<comment type="sequence caution" evidence="1">
    <conflict type="erroneous initiation">
        <sequence resource="EMBL-CDS" id="AAS03466"/>
    </conflict>
    <text>Truncated N-terminus.</text>
</comment>
<gene>
    <name evidence="2" type="primary">whiA</name>
    <name type="ordered locus">MAP_1149</name>
</gene>
<keyword id="KW-0131">Cell cycle</keyword>
<keyword id="KW-0132">Cell division</keyword>
<keyword id="KW-0238">DNA-binding</keyword>
<keyword id="KW-1185">Reference proteome</keyword>
<name>WHIA_MYCPA</name>
<evidence type="ECO:0000250" key="1">
    <source>
        <dbReference type="UniProtKB" id="P9WF45"/>
    </source>
</evidence>
<evidence type="ECO:0000255" key="2">
    <source>
        <dbReference type="HAMAP-Rule" id="MF_01420"/>
    </source>
</evidence>
<proteinExistence type="inferred from homology"/>
<dbReference type="EMBL" id="AE016958">
    <property type="protein sequence ID" value="AAS03466.1"/>
    <property type="status" value="ALT_INIT"/>
    <property type="molecule type" value="Genomic_DNA"/>
</dbReference>
<dbReference type="SMR" id="Q741E2"/>
<dbReference type="STRING" id="262316.MAP_1149"/>
<dbReference type="KEGG" id="mpa:MAP_1149"/>
<dbReference type="eggNOG" id="COG1481">
    <property type="taxonomic scope" value="Bacteria"/>
</dbReference>
<dbReference type="HOGENOM" id="CLU_053282_0_0_11"/>
<dbReference type="Proteomes" id="UP000000580">
    <property type="component" value="Chromosome"/>
</dbReference>
<dbReference type="GO" id="GO:0003677">
    <property type="term" value="F:DNA binding"/>
    <property type="evidence" value="ECO:0007669"/>
    <property type="project" value="UniProtKB-UniRule"/>
</dbReference>
<dbReference type="GO" id="GO:0051301">
    <property type="term" value="P:cell division"/>
    <property type="evidence" value="ECO:0007669"/>
    <property type="project" value="UniProtKB-UniRule"/>
</dbReference>
<dbReference type="GO" id="GO:0043937">
    <property type="term" value="P:regulation of sporulation"/>
    <property type="evidence" value="ECO:0007669"/>
    <property type="project" value="InterPro"/>
</dbReference>
<dbReference type="FunFam" id="3.10.28.10:FF:000001">
    <property type="entry name" value="Probable cell division protein WhiA"/>
    <property type="match status" value="1"/>
</dbReference>
<dbReference type="Gene3D" id="3.10.28.10">
    <property type="entry name" value="Homing endonucleases"/>
    <property type="match status" value="1"/>
</dbReference>
<dbReference type="HAMAP" id="MF_01420">
    <property type="entry name" value="HTH_type_WhiA"/>
    <property type="match status" value="1"/>
</dbReference>
<dbReference type="InterPro" id="IPR027434">
    <property type="entry name" value="Homing_endonucl"/>
</dbReference>
<dbReference type="InterPro" id="IPR018478">
    <property type="entry name" value="Sporu_reg_WhiA_N_dom"/>
</dbReference>
<dbReference type="InterPro" id="IPR003802">
    <property type="entry name" value="Sporulation_regulator_WhiA"/>
</dbReference>
<dbReference type="InterPro" id="IPR023054">
    <property type="entry name" value="Sporulation_regulator_WhiA_C"/>
</dbReference>
<dbReference type="InterPro" id="IPR039518">
    <property type="entry name" value="WhiA_LAGLIDADG_dom"/>
</dbReference>
<dbReference type="NCBIfam" id="TIGR00647">
    <property type="entry name" value="DNA_bind_WhiA"/>
    <property type="match status" value="1"/>
</dbReference>
<dbReference type="PANTHER" id="PTHR37307">
    <property type="entry name" value="CELL DIVISION PROTEIN WHIA-RELATED"/>
    <property type="match status" value="1"/>
</dbReference>
<dbReference type="PANTHER" id="PTHR37307:SF1">
    <property type="entry name" value="CELL DIVISION PROTEIN WHIA-RELATED"/>
    <property type="match status" value="1"/>
</dbReference>
<dbReference type="Pfam" id="PF02650">
    <property type="entry name" value="HTH_WhiA"/>
    <property type="match status" value="1"/>
</dbReference>
<dbReference type="Pfam" id="PF14527">
    <property type="entry name" value="LAGLIDADG_WhiA"/>
    <property type="match status" value="1"/>
</dbReference>
<dbReference type="Pfam" id="PF10298">
    <property type="entry name" value="WhiA_N"/>
    <property type="match status" value="1"/>
</dbReference>
<reference key="1">
    <citation type="journal article" date="2005" name="Proc. Natl. Acad. Sci. U.S.A.">
        <title>The complete genome sequence of Mycobacterium avium subspecies paratuberculosis.</title>
        <authorList>
            <person name="Li L."/>
            <person name="Bannantine J.P."/>
            <person name="Zhang Q."/>
            <person name="Amonsin A."/>
            <person name="May B.J."/>
            <person name="Alt D."/>
            <person name="Banerji N."/>
            <person name="Kanjilal S."/>
            <person name="Kapur V."/>
        </authorList>
    </citation>
    <scope>NUCLEOTIDE SEQUENCE [LARGE SCALE GENOMIC DNA]</scope>
    <source>
        <strain>ATCC BAA-968 / K-10</strain>
    </source>
</reference>